<organism>
    <name type="scientific">Danio rerio</name>
    <name type="common">Zebrafish</name>
    <name type="synonym">Brachydanio rerio</name>
    <dbReference type="NCBI Taxonomy" id="7955"/>
    <lineage>
        <taxon>Eukaryota</taxon>
        <taxon>Metazoa</taxon>
        <taxon>Chordata</taxon>
        <taxon>Craniata</taxon>
        <taxon>Vertebrata</taxon>
        <taxon>Euteleostomi</taxon>
        <taxon>Actinopterygii</taxon>
        <taxon>Neopterygii</taxon>
        <taxon>Teleostei</taxon>
        <taxon>Ostariophysi</taxon>
        <taxon>Cypriniformes</taxon>
        <taxon>Danionidae</taxon>
        <taxon>Danioninae</taxon>
        <taxon>Danio</taxon>
    </lineage>
</organism>
<evidence type="ECO:0000250" key="1"/>
<evidence type="ECO:0000250" key="2">
    <source>
        <dbReference type="UniProtKB" id="P0C0S5"/>
    </source>
</evidence>
<evidence type="ECO:0000256" key="3">
    <source>
        <dbReference type="SAM" id="MobiDB-lite"/>
    </source>
</evidence>
<evidence type="ECO:0000269" key="4">
    <source>
    </source>
</evidence>
<evidence type="ECO:0000305" key="5"/>
<reference key="1">
    <citation type="journal article" date="2001" name="Dev. Genes Evol.">
        <title>A zebrafish histone variant H2A.F/Z and a transgenic H2A.F/Z:GFP fusion protein for in vivo studies of embryonic development.</title>
        <authorList>
            <person name="Pauls S."/>
            <person name="Geldmacher-Voss B."/>
            <person name="Campos-Ortega J.A."/>
        </authorList>
    </citation>
    <scope>NUCLEOTIDE SEQUENCE [GENOMIC DNA / MRNA]</scope>
    <scope>SUBCELLULAR LOCATION</scope>
</reference>
<reference key="2">
    <citation type="submission" date="2003-03" db="EMBL/GenBank/DDBJ databases">
        <authorList>
            <consortium name="NIH - Zebrafish Gene Collection (ZGC) project"/>
        </authorList>
    </citation>
    <scope>NUCLEOTIDE SEQUENCE [LARGE SCALE MRNA]</scope>
    <source>
        <strain>SJD</strain>
    </source>
</reference>
<dbReference type="EMBL" id="AF414110">
    <property type="protein sequence ID" value="AAL10395.1"/>
    <property type="molecule type" value="mRNA"/>
</dbReference>
<dbReference type="EMBL" id="AF414111">
    <property type="protein sequence ID" value="AAL10396.1"/>
    <property type="molecule type" value="Genomic_DNA"/>
</dbReference>
<dbReference type="EMBL" id="BC049019">
    <property type="protein sequence ID" value="AAH49019.1"/>
    <property type="molecule type" value="mRNA"/>
</dbReference>
<dbReference type="RefSeq" id="NP_001188492.1">
    <property type="nucleotide sequence ID" value="NM_001201563.1"/>
</dbReference>
<dbReference type="RefSeq" id="NP_705930.1">
    <property type="nucleotide sequence ID" value="NM_153644.1"/>
</dbReference>
<dbReference type="SMR" id="Q71PD7"/>
<dbReference type="FunCoup" id="Q71PD7">
    <property type="interactions" value="2475"/>
</dbReference>
<dbReference type="STRING" id="7955.ENSDARP00000090434"/>
<dbReference type="PaxDb" id="7955-ENSDARP00000090434"/>
<dbReference type="Ensembl" id="ENSDART00000099660">
    <property type="protein sequence ID" value="ENSDARP00000090434"/>
    <property type="gene ID" value="ENSDARG00000068820"/>
</dbReference>
<dbReference type="GeneID" id="252913"/>
<dbReference type="KEGG" id="dre:252913"/>
<dbReference type="AGR" id="ZFIN:ZDB-GENE-020717-1"/>
<dbReference type="CTD" id="252913"/>
<dbReference type="ZFIN" id="ZDB-GENE-020717-1">
    <property type="gene designation" value="h2az2a"/>
</dbReference>
<dbReference type="eggNOG" id="KOG1757">
    <property type="taxonomic scope" value="Eukaryota"/>
</dbReference>
<dbReference type="HOGENOM" id="CLU_062828_2_2_1"/>
<dbReference type="InParanoid" id="Q71PD7"/>
<dbReference type="OMA" id="MNKKGAP"/>
<dbReference type="OrthoDB" id="9421954at2759"/>
<dbReference type="PhylomeDB" id="Q71PD7"/>
<dbReference type="TreeFam" id="TF354232"/>
<dbReference type="Reactome" id="R-DRE-212300">
    <property type="pathway name" value="PRC2 methylates histones and DNA"/>
</dbReference>
<dbReference type="Reactome" id="R-DRE-2299718">
    <property type="pathway name" value="Condensation of Prophase Chromosomes"/>
</dbReference>
<dbReference type="Reactome" id="R-DRE-2559580">
    <property type="pathway name" value="Oxidative Stress Induced Senescence"/>
</dbReference>
<dbReference type="Reactome" id="R-DRE-3214858">
    <property type="pathway name" value="RMTs methylate histone arginines"/>
</dbReference>
<dbReference type="Reactome" id="R-DRE-427413">
    <property type="pathway name" value="NoRC negatively regulates rRNA expression"/>
</dbReference>
<dbReference type="Reactome" id="R-DRE-5625886">
    <property type="pathway name" value="Activated PKN1 stimulates transcription of AR (androgen receptor) regulated genes KLK2 and KLK3"/>
</dbReference>
<dbReference type="Reactome" id="R-DRE-73728">
    <property type="pathway name" value="RNA Polymerase I Promoter Opening"/>
</dbReference>
<dbReference type="Reactome" id="R-DRE-8936459">
    <property type="pathway name" value="RUNX1 regulates genes involved in megakaryocyte differentiation and platelet function"/>
</dbReference>
<dbReference type="Reactome" id="R-DRE-9018519">
    <property type="pathway name" value="Estrogen-dependent gene expression"/>
</dbReference>
<dbReference type="Reactome" id="R-DRE-9841922">
    <property type="pathway name" value="MLL4 and MLL3 complexes regulate expression of PPARG target genes in adipogenesis and hepatic steatosis"/>
</dbReference>
<dbReference type="Reactome" id="R-DRE-9843940">
    <property type="pathway name" value="Regulation of endogenous retroelements by KRAB-ZFP proteins"/>
</dbReference>
<dbReference type="Reactome" id="R-DRE-9843970">
    <property type="pathway name" value="Regulation of endogenous retroelements by the Human Silencing Hub (HUSH) complex"/>
</dbReference>
<dbReference type="ChiTaRS" id="h2afva">
    <property type="organism name" value="zebrafish"/>
</dbReference>
<dbReference type="PRO" id="PR:Q71PD7"/>
<dbReference type="Proteomes" id="UP000000437">
    <property type="component" value="Chromosome 5"/>
</dbReference>
<dbReference type="Bgee" id="ENSDARG00000068820">
    <property type="expression patterns" value="Expressed in early embryo and 26 other cell types or tissues"/>
</dbReference>
<dbReference type="ExpressionAtlas" id="Q71PD7">
    <property type="expression patterns" value="baseline and differential"/>
</dbReference>
<dbReference type="GO" id="GO:0000786">
    <property type="term" value="C:nucleosome"/>
    <property type="evidence" value="ECO:0000318"/>
    <property type="project" value="GO_Central"/>
</dbReference>
<dbReference type="GO" id="GO:0005634">
    <property type="term" value="C:nucleus"/>
    <property type="evidence" value="ECO:0000318"/>
    <property type="project" value="GO_Central"/>
</dbReference>
<dbReference type="GO" id="GO:0003677">
    <property type="term" value="F:DNA binding"/>
    <property type="evidence" value="ECO:0007669"/>
    <property type="project" value="UniProtKB-KW"/>
</dbReference>
<dbReference type="GO" id="GO:0046982">
    <property type="term" value="F:protein heterodimerization activity"/>
    <property type="evidence" value="ECO:0007669"/>
    <property type="project" value="InterPro"/>
</dbReference>
<dbReference type="GO" id="GO:0030527">
    <property type="term" value="F:structural constituent of chromatin"/>
    <property type="evidence" value="ECO:0000318"/>
    <property type="project" value="GO_Central"/>
</dbReference>
<dbReference type="GO" id="GO:0031507">
    <property type="term" value="P:heterochromatin formation"/>
    <property type="evidence" value="ECO:0000318"/>
    <property type="project" value="GO_Central"/>
</dbReference>
<dbReference type="GO" id="GO:0045636">
    <property type="term" value="P:positive regulation of melanocyte differentiation"/>
    <property type="evidence" value="ECO:0000315"/>
    <property type="project" value="ZFIN"/>
</dbReference>
<dbReference type="CDD" id="cd00074">
    <property type="entry name" value="HFD_H2A"/>
    <property type="match status" value="1"/>
</dbReference>
<dbReference type="FunFam" id="1.10.20.10:FF:000005">
    <property type="entry name" value="Histone H2A"/>
    <property type="match status" value="1"/>
</dbReference>
<dbReference type="Gene3D" id="1.10.20.10">
    <property type="entry name" value="Histone, subunit A"/>
    <property type="match status" value="1"/>
</dbReference>
<dbReference type="InterPro" id="IPR009072">
    <property type="entry name" value="Histone-fold"/>
</dbReference>
<dbReference type="InterPro" id="IPR002119">
    <property type="entry name" value="Histone_H2A"/>
</dbReference>
<dbReference type="InterPro" id="IPR007125">
    <property type="entry name" value="Histone_H2A/H2B/H3"/>
</dbReference>
<dbReference type="InterPro" id="IPR032454">
    <property type="entry name" value="Histone_H2A_C"/>
</dbReference>
<dbReference type="InterPro" id="IPR032458">
    <property type="entry name" value="Histone_H2A_CS"/>
</dbReference>
<dbReference type="PANTHER" id="PTHR23430">
    <property type="entry name" value="HISTONE H2A"/>
    <property type="match status" value="1"/>
</dbReference>
<dbReference type="Pfam" id="PF00125">
    <property type="entry name" value="Histone"/>
    <property type="match status" value="1"/>
</dbReference>
<dbReference type="Pfam" id="PF16211">
    <property type="entry name" value="Histone_H2A_C"/>
    <property type="match status" value="1"/>
</dbReference>
<dbReference type="PRINTS" id="PR00620">
    <property type="entry name" value="HISTONEH2A"/>
</dbReference>
<dbReference type="SMART" id="SM00414">
    <property type="entry name" value="H2A"/>
    <property type="match status" value="1"/>
</dbReference>
<dbReference type="SUPFAM" id="SSF47113">
    <property type="entry name" value="Histone-fold"/>
    <property type="match status" value="1"/>
</dbReference>
<dbReference type="PROSITE" id="PS00046">
    <property type="entry name" value="HISTONE_H2A"/>
    <property type="match status" value="1"/>
</dbReference>
<keyword id="KW-0007">Acetylation</keyword>
<keyword id="KW-0158">Chromosome</keyword>
<keyword id="KW-0238">DNA-binding</keyword>
<keyword id="KW-1017">Isopeptide bond</keyword>
<keyword id="KW-0544">Nucleosome core</keyword>
<keyword id="KW-0539">Nucleus</keyword>
<keyword id="KW-1185">Reference proteome</keyword>
<keyword id="KW-0832">Ubl conjugation</keyword>
<protein>
    <recommendedName>
        <fullName>Histone H2A.V</fullName>
    </recommendedName>
    <alternativeName>
        <fullName>H2A.F/Z</fullName>
    </alternativeName>
</protein>
<proteinExistence type="evidence at transcript level"/>
<accession>Q71PD7</accession>
<sequence length="128" mass="13509">MAGGKAGKDSGKAKAKAVSRSQRAGLQFPVGRIHRHLKTRTTSHGRVGATAAVYSAAILEYLTAEVLELAGNASKDLKVKRITPRHLQLAIRGDEELDSLIKATIAGGGVIPHIHKSLIGKKGQQKTA</sequence>
<comment type="function">
    <text evidence="1">Variant histone H2A which replaces conventional H2A in a subset of nucleosomes. Nucleosomes wrap and compact DNA into chromatin, limiting DNA accessibility to the cellular machineries which require DNA as a template. Histones thereby play a central role in transcription regulation, DNA repair, DNA replication and chromosomal stability. DNA accessibility is regulated via a complex set of post-translational modifications of histones, also called histone code, and nucleosome remodeling. May be involved in the formation of constitutive heterochromatin. May be required for chromosome segregation during cell division (By similarity).</text>
</comment>
<comment type="subunit">
    <text evidence="1">The nucleosome is a histone octamer containing two molecules each of H2A, H2B, H3 and H4 assembled in one H3-H4 heterotetramer and two H2A-H2B heterodimers. The octamer wraps approximately 147 bp of DNA. H2A or its variant H2AZ1 forms a heterodimer with H2B (By similarity).</text>
</comment>
<comment type="subcellular location">
    <subcellularLocation>
        <location evidence="4">Nucleus</location>
    </subcellularLocation>
    <subcellularLocation>
        <location evidence="4">Chromosome</location>
    </subcellularLocation>
</comment>
<comment type="PTM">
    <text evidence="1">Monoubiquitination of Lys-122 gives a specific tag for epigenetic transcriptional repression.</text>
</comment>
<comment type="PTM">
    <text evidence="1">Acetylated on Lys-5, Lys-8 and Lys-12 when associated with the 5'-end of active genes.</text>
</comment>
<comment type="similarity">
    <text evidence="5">Belongs to the histone H2A family.</text>
</comment>
<name>H2AV_DANRE</name>
<gene>
    <name type="primary">h2az2a</name>
</gene>
<feature type="initiator methionine" description="Removed" evidence="1">
    <location>
        <position position="1"/>
    </location>
</feature>
<feature type="chain" id="PRO_0000055303" description="Histone H2A.V">
    <location>
        <begin position="2"/>
        <end position="128"/>
    </location>
</feature>
<feature type="region of interest" description="Disordered" evidence="3">
    <location>
        <begin position="1"/>
        <end position="23"/>
    </location>
</feature>
<feature type="compositionally biased region" description="Basic and acidic residues" evidence="3">
    <location>
        <begin position="1"/>
        <end position="12"/>
    </location>
</feature>
<feature type="modified residue" description="N6-acetyllysine" evidence="1">
    <location>
        <position position="5"/>
    </location>
</feature>
<feature type="modified residue" description="N6-acetyllysine" evidence="1">
    <location>
        <position position="8"/>
    </location>
</feature>
<feature type="modified residue" description="N6-acetyllysine" evidence="1">
    <location>
        <position position="12"/>
    </location>
</feature>
<feature type="modified residue" description="N6-lactoyllysine; alternate" evidence="2">
    <location>
        <position position="12"/>
    </location>
</feature>
<feature type="modified residue" description="N6-lactoyllysine; alternate" evidence="2">
    <location>
        <position position="14"/>
    </location>
</feature>
<feature type="modified residue" description="N6-lactoyllysine" evidence="2">
    <location>
        <position position="116"/>
    </location>
</feature>
<feature type="cross-link" description="Glycyl lysine isopeptide (Lys-Gly) (interchain with G-Cter in ubiquitin)" evidence="1">
    <location>
        <position position="122"/>
    </location>
</feature>